<keyword id="KW-0456">Lyase</keyword>
<keyword id="KW-0501">Molybdenum cofactor biosynthesis</keyword>
<dbReference type="EC" id="4.6.1.17" evidence="1"/>
<dbReference type="EMBL" id="FM178379">
    <property type="protein sequence ID" value="CAQ79563.1"/>
    <property type="molecule type" value="Genomic_DNA"/>
</dbReference>
<dbReference type="RefSeq" id="WP_012550453.1">
    <property type="nucleotide sequence ID" value="NC_011312.1"/>
</dbReference>
<dbReference type="SMR" id="B6EGI3"/>
<dbReference type="KEGG" id="vsa:VSAL_I1878"/>
<dbReference type="eggNOG" id="COG0315">
    <property type="taxonomic scope" value="Bacteria"/>
</dbReference>
<dbReference type="HOGENOM" id="CLU_074693_1_1_6"/>
<dbReference type="UniPathway" id="UPA00344"/>
<dbReference type="Proteomes" id="UP000001730">
    <property type="component" value="Chromosome 1"/>
</dbReference>
<dbReference type="GO" id="GO:0061799">
    <property type="term" value="F:cyclic pyranopterin monophosphate synthase activity"/>
    <property type="evidence" value="ECO:0007669"/>
    <property type="project" value="UniProtKB-UniRule"/>
</dbReference>
<dbReference type="GO" id="GO:0061798">
    <property type="term" value="F:GTP 3',8'-cyclase activity"/>
    <property type="evidence" value="ECO:0007669"/>
    <property type="project" value="TreeGrafter"/>
</dbReference>
<dbReference type="GO" id="GO:0006777">
    <property type="term" value="P:Mo-molybdopterin cofactor biosynthetic process"/>
    <property type="evidence" value="ECO:0007669"/>
    <property type="project" value="UniProtKB-UniRule"/>
</dbReference>
<dbReference type="CDD" id="cd01420">
    <property type="entry name" value="MoaC_PE"/>
    <property type="match status" value="1"/>
</dbReference>
<dbReference type="FunFam" id="3.30.70.640:FF:000001">
    <property type="entry name" value="Cyclic pyranopterin monophosphate synthase"/>
    <property type="match status" value="1"/>
</dbReference>
<dbReference type="Gene3D" id="3.30.70.640">
    <property type="entry name" value="Molybdopterin cofactor biosynthesis C (MoaC) domain"/>
    <property type="match status" value="1"/>
</dbReference>
<dbReference type="HAMAP" id="MF_01224_B">
    <property type="entry name" value="MoaC_B"/>
    <property type="match status" value="1"/>
</dbReference>
<dbReference type="InterPro" id="IPR023045">
    <property type="entry name" value="MoaC"/>
</dbReference>
<dbReference type="InterPro" id="IPR047594">
    <property type="entry name" value="MoaC_bact/euk"/>
</dbReference>
<dbReference type="InterPro" id="IPR036522">
    <property type="entry name" value="MoaC_sf"/>
</dbReference>
<dbReference type="InterPro" id="IPR050105">
    <property type="entry name" value="MoCo_biosynth_MoaA/MoaC"/>
</dbReference>
<dbReference type="InterPro" id="IPR002820">
    <property type="entry name" value="Mopterin_CF_biosynth-C_dom"/>
</dbReference>
<dbReference type="NCBIfam" id="TIGR00581">
    <property type="entry name" value="moaC"/>
    <property type="match status" value="1"/>
</dbReference>
<dbReference type="NCBIfam" id="NF006870">
    <property type="entry name" value="PRK09364.1"/>
    <property type="match status" value="1"/>
</dbReference>
<dbReference type="PANTHER" id="PTHR22960:SF0">
    <property type="entry name" value="MOLYBDENUM COFACTOR BIOSYNTHESIS PROTEIN 1"/>
    <property type="match status" value="1"/>
</dbReference>
<dbReference type="PANTHER" id="PTHR22960">
    <property type="entry name" value="MOLYBDOPTERIN COFACTOR SYNTHESIS PROTEIN A"/>
    <property type="match status" value="1"/>
</dbReference>
<dbReference type="Pfam" id="PF01967">
    <property type="entry name" value="MoaC"/>
    <property type="match status" value="1"/>
</dbReference>
<dbReference type="SUPFAM" id="SSF55040">
    <property type="entry name" value="Molybdenum cofactor biosynthesis protein C, MoaC"/>
    <property type="match status" value="1"/>
</dbReference>
<accession>B6EGI3</accession>
<name>MOAC_ALISL</name>
<proteinExistence type="inferred from homology"/>
<sequence>MSNFTHINASGEANMVDVSAKQETVREARAEAFVHMAPETLKLIVSGSHHKGDVFATARIAGIQAAKKTWDLIPLCHPLLLTKVEVQLEAIEAENMVRIESVCKLTGKTGVEMEALTAASVAALTIYDMCKAVQKDMVISQVRLLEKTGGKSGHFKADA</sequence>
<evidence type="ECO:0000255" key="1">
    <source>
        <dbReference type="HAMAP-Rule" id="MF_01224"/>
    </source>
</evidence>
<gene>
    <name evidence="1" type="primary">moaC</name>
    <name type="ordered locus">VSAL_I1878</name>
</gene>
<protein>
    <recommendedName>
        <fullName evidence="1">Cyclic pyranopterin monophosphate synthase</fullName>
        <ecNumber evidence="1">4.6.1.17</ecNumber>
    </recommendedName>
    <alternativeName>
        <fullName evidence="1">Molybdenum cofactor biosynthesis protein C</fullName>
    </alternativeName>
</protein>
<organism>
    <name type="scientific">Aliivibrio salmonicida (strain LFI1238)</name>
    <name type="common">Vibrio salmonicida (strain LFI1238)</name>
    <dbReference type="NCBI Taxonomy" id="316275"/>
    <lineage>
        <taxon>Bacteria</taxon>
        <taxon>Pseudomonadati</taxon>
        <taxon>Pseudomonadota</taxon>
        <taxon>Gammaproteobacteria</taxon>
        <taxon>Vibrionales</taxon>
        <taxon>Vibrionaceae</taxon>
        <taxon>Aliivibrio</taxon>
    </lineage>
</organism>
<reference key="1">
    <citation type="journal article" date="2008" name="BMC Genomics">
        <title>The genome sequence of the fish pathogen Aliivibrio salmonicida strain LFI1238 shows extensive evidence of gene decay.</title>
        <authorList>
            <person name="Hjerde E."/>
            <person name="Lorentzen M.S."/>
            <person name="Holden M.T."/>
            <person name="Seeger K."/>
            <person name="Paulsen S."/>
            <person name="Bason N."/>
            <person name="Churcher C."/>
            <person name="Harris D."/>
            <person name="Norbertczak H."/>
            <person name="Quail M.A."/>
            <person name="Sanders S."/>
            <person name="Thurston S."/>
            <person name="Parkhill J."/>
            <person name="Willassen N.P."/>
            <person name="Thomson N.R."/>
        </authorList>
    </citation>
    <scope>NUCLEOTIDE SEQUENCE [LARGE SCALE GENOMIC DNA]</scope>
    <source>
        <strain>LFI1238</strain>
    </source>
</reference>
<feature type="chain" id="PRO_1000139241" description="Cyclic pyranopterin monophosphate synthase">
    <location>
        <begin position="1"/>
        <end position="159"/>
    </location>
</feature>
<feature type="active site" evidence="1">
    <location>
        <position position="128"/>
    </location>
</feature>
<feature type="binding site" evidence="1">
    <location>
        <begin position="75"/>
        <end position="77"/>
    </location>
    <ligand>
        <name>substrate</name>
    </ligand>
</feature>
<feature type="binding site" evidence="1">
    <location>
        <begin position="113"/>
        <end position="114"/>
    </location>
    <ligand>
        <name>substrate</name>
    </ligand>
</feature>
<comment type="function">
    <text evidence="1">Catalyzes the conversion of (8S)-3',8-cyclo-7,8-dihydroguanosine 5'-triphosphate to cyclic pyranopterin monophosphate (cPMP).</text>
</comment>
<comment type="catalytic activity">
    <reaction evidence="1">
        <text>(8S)-3',8-cyclo-7,8-dihydroguanosine 5'-triphosphate = cyclic pyranopterin phosphate + diphosphate</text>
        <dbReference type="Rhea" id="RHEA:49580"/>
        <dbReference type="ChEBI" id="CHEBI:33019"/>
        <dbReference type="ChEBI" id="CHEBI:59648"/>
        <dbReference type="ChEBI" id="CHEBI:131766"/>
        <dbReference type="EC" id="4.6.1.17"/>
    </reaction>
</comment>
<comment type="pathway">
    <text evidence="1">Cofactor biosynthesis; molybdopterin biosynthesis.</text>
</comment>
<comment type="subunit">
    <text evidence="1">Homohexamer; trimer of dimers.</text>
</comment>
<comment type="similarity">
    <text evidence="1">Belongs to the MoaC family.</text>
</comment>